<dbReference type="EMBL" id="CP000848">
    <property type="protein sequence ID" value="ABV76149.1"/>
    <property type="molecule type" value="Genomic_DNA"/>
</dbReference>
<dbReference type="RefSeq" id="WP_012150739.1">
    <property type="nucleotide sequence ID" value="NZ_CP121767.1"/>
</dbReference>
<dbReference type="SMR" id="A8GRX4"/>
<dbReference type="GeneID" id="79937295"/>
<dbReference type="KEGG" id="rri:A1G_03060"/>
<dbReference type="HOGENOM" id="CLU_089554_1_1_5"/>
<dbReference type="Proteomes" id="UP000006832">
    <property type="component" value="Chromosome"/>
</dbReference>
<dbReference type="GO" id="GO:0005886">
    <property type="term" value="C:plasma membrane"/>
    <property type="evidence" value="ECO:0007669"/>
    <property type="project" value="UniProtKB-SubCell"/>
</dbReference>
<dbReference type="HAMAP" id="MF_00189">
    <property type="entry name" value="YciB"/>
    <property type="match status" value="1"/>
</dbReference>
<dbReference type="InterPro" id="IPR006008">
    <property type="entry name" value="YciB"/>
</dbReference>
<dbReference type="NCBIfam" id="TIGR00997">
    <property type="entry name" value="ispZ"/>
    <property type="match status" value="1"/>
</dbReference>
<dbReference type="NCBIfam" id="NF001323">
    <property type="entry name" value="PRK00259.1-1"/>
    <property type="match status" value="1"/>
</dbReference>
<dbReference type="PANTHER" id="PTHR36917:SF1">
    <property type="entry name" value="INNER MEMBRANE-SPANNING PROTEIN YCIB"/>
    <property type="match status" value="1"/>
</dbReference>
<dbReference type="PANTHER" id="PTHR36917">
    <property type="entry name" value="INTRACELLULAR SEPTATION PROTEIN A-RELATED"/>
    <property type="match status" value="1"/>
</dbReference>
<dbReference type="Pfam" id="PF04279">
    <property type="entry name" value="IspA"/>
    <property type="match status" value="1"/>
</dbReference>
<protein>
    <recommendedName>
        <fullName evidence="1">Inner membrane-spanning protein YciB</fullName>
    </recommendedName>
</protein>
<gene>
    <name evidence="1" type="primary">yciB</name>
    <name type="ordered locus">A1G_03060</name>
</gene>
<organism>
    <name type="scientific">Rickettsia rickettsii (strain Sheila Smith)</name>
    <dbReference type="NCBI Taxonomy" id="392021"/>
    <lineage>
        <taxon>Bacteria</taxon>
        <taxon>Pseudomonadati</taxon>
        <taxon>Pseudomonadota</taxon>
        <taxon>Alphaproteobacteria</taxon>
        <taxon>Rickettsiales</taxon>
        <taxon>Rickettsiaceae</taxon>
        <taxon>Rickettsieae</taxon>
        <taxon>Rickettsia</taxon>
        <taxon>spotted fever group</taxon>
    </lineage>
</organism>
<sequence>MLKFLSEIGPVIAFFAGFFYGGGIQHATLYMLITSVICITLCYVIDKKVSKLSIISTTVLLVSGSITLISGDSMYIKIKPTILYVIFGIIFLMSGIRKNPFIKYALESIVRLKEESWITLSYRTAAFFFFMAVVNEVVWRNCSDETWVKFKVFGVIPITFIFILLQLPLLLKNKLPDSKI</sequence>
<evidence type="ECO:0000255" key="1">
    <source>
        <dbReference type="HAMAP-Rule" id="MF_00189"/>
    </source>
</evidence>
<keyword id="KW-0997">Cell inner membrane</keyword>
<keyword id="KW-1003">Cell membrane</keyword>
<keyword id="KW-0472">Membrane</keyword>
<keyword id="KW-0812">Transmembrane</keyword>
<keyword id="KW-1133">Transmembrane helix</keyword>
<accession>A8GRX4</accession>
<name>YCIB_RICRS</name>
<reference key="1">
    <citation type="submission" date="2007-09" db="EMBL/GenBank/DDBJ databases">
        <title>Complete genome sequence of Rickettsia rickettsii.</title>
        <authorList>
            <person name="Madan A."/>
            <person name="Fahey J."/>
            <person name="Helton E."/>
            <person name="Ketteman M."/>
            <person name="Madan A."/>
            <person name="Rodrigues S."/>
            <person name="Sanchez A."/>
            <person name="Dasch G."/>
            <person name="Eremeeva M."/>
        </authorList>
    </citation>
    <scope>NUCLEOTIDE SEQUENCE [LARGE SCALE GENOMIC DNA]</scope>
    <source>
        <strain>Sheila Smith</strain>
    </source>
</reference>
<feature type="chain" id="PRO_1000021052" description="Inner membrane-spanning protein YciB">
    <location>
        <begin position="1"/>
        <end position="180"/>
    </location>
</feature>
<feature type="transmembrane region" description="Helical" evidence="1">
    <location>
        <begin position="4"/>
        <end position="24"/>
    </location>
</feature>
<feature type="transmembrane region" description="Helical" evidence="1">
    <location>
        <begin position="25"/>
        <end position="45"/>
    </location>
</feature>
<feature type="transmembrane region" description="Helical" evidence="1">
    <location>
        <begin position="49"/>
        <end position="69"/>
    </location>
</feature>
<feature type="transmembrane region" description="Helical" evidence="1">
    <location>
        <begin position="76"/>
        <end position="96"/>
    </location>
</feature>
<feature type="transmembrane region" description="Helical" evidence="1">
    <location>
        <begin position="118"/>
        <end position="138"/>
    </location>
</feature>
<feature type="transmembrane region" description="Helical" evidence="1">
    <location>
        <begin position="150"/>
        <end position="170"/>
    </location>
</feature>
<proteinExistence type="inferred from homology"/>
<comment type="function">
    <text evidence="1">Plays a role in cell envelope biogenesis, maintenance of cell envelope integrity and membrane homeostasis.</text>
</comment>
<comment type="subcellular location">
    <subcellularLocation>
        <location evidence="1">Cell inner membrane</location>
        <topology evidence="1">Multi-pass membrane protein</topology>
    </subcellularLocation>
</comment>
<comment type="similarity">
    <text evidence="1">Belongs to the YciB family.</text>
</comment>